<keyword id="KW-1017">Isopeptide bond</keyword>
<keyword id="KW-0479">Metal-binding</keyword>
<keyword id="KW-0507">mRNA processing</keyword>
<keyword id="KW-0508">mRNA splicing</keyword>
<keyword id="KW-0539">Nucleus</keyword>
<keyword id="KW-0597">Phosphoprotein</keyword>
<keyword id="KW-1185">Reference proteome</keyword>
<keyword id="KW-0677">Repeat</keyword>
<keyword id="KW-0687">Ribonucleoprotein</keyword>
<keyword id="KW-0694">RNA-binding</keyword>
<keyword id="KW-0747">Spliceosome</keyword>
<keyword id="KW-0832">Ubl conjugation</keyword>
<keyword id="KW-0862">Zinc</keyword>
<keyword id="KW-0863">Zinc-finger</keyword>
<reference key="1">
    <citation type="journal article" date="1995" name="Genomics">
        <title>Cloning and mapping of the U2af1-rs2 gene with a high transmission distortion in interspecific backcross progeny.</title>
        <authorList>
            <person name="Yamaoka T."/>
            <person name="Hatada I."/>
            <person name="Kitagawa K."/>
            <person name="Wang X."/>
            <person name="Mukai T."/>
        </authorList>
    </citation>
    <scope>NUCLEOTIDE SEQUENCE [MRNA]</scope>
    <source>
        <tissue>Brain</tissue>
    </source>
</reference>
<reference key="2">
    <citation type="journal article" date="2010" name="Cell">
        <title>A tissue-specific atlas of mouse protein phosphorylation and expression.</title>
        <authorList>
            <person name="Huttlin E.L."/>
            <person name="Jedrychowski M.P."/>
            <person name="Elias J.E."/>
            <person name="Goswami T."/>
            <person name="Rad R."/>
            <person name="Beausoleil S.A."/>
            <person name="Villen J."/>
            <person name="Haas W."/>
            <person name="Sowa M.E."/>
            <person name="Gygi S.P."/>
        </authorList>
    </citation>
    <scope>PHOSPHORYLATION [LARGE SCALE ANALYSIS] AT SER-353</scope>
    <scope>IDENTIFICATION BY MASS SPECTROMETRY [LARGE SCALE ANALYSIS]</scope>
    <source>
        <tissue>Kidney</tissue>
    </source>
</reference>
<protein>
    <recommendedName>
        <fullName>U2 small nuclear ribonucleoprotein auxiliary factor 35 kDa subunit-related protein 2</fullName>
    </recommendedName>
    <alternativeName>
        <fullName>CCCH type zinc finger, RNA-binding motif and serine/arginine rich protein 2</fullName>
    </alternativeName>
    <alternativeName>
        <fullName>U2(RNU2) small nuclear RNA auxiliary factor 1-like 2</fullName>
    </alternativeName>
    <alternativeName>
        <fullName>U2AF35-related protein</fullName>
        <shortName>URP</shortName>
    </alternativeName>
</protein>
<gene>
    <name type="primary">Zrsr2</name>
    <name type="synonym">U2af1-rs2</name>
    <name type="synonym">U2af1l2</name>
    <name type="synonym">U2af1rs2</name>
</gene>
<sequence length="462" mass="55358">METAGATADATAGPQKLSRKKYLALRKKERRKRRRQALARLREAELAQKEEEEDPLAEEKRLEEERLLEEERQRLHEEWLLREEKAQEEFRAKKKKEEEARKRKEELERKLKAEWEEQQRKEREEEEQKRQEKREREEAVQKMLDQAENELENGGTWQNPEPPMDIRVLEKDRANCPFYSKTGACRFGDRCSRKHNFPTSSPTLLIKGMFTTFGMEQCRRDDYDPDSSLEFSEEEIYQQFLDFYYDVLPEFKSVGKVIQFKVSCNLEPHLRGNVYVQYQSEEDCQAAFSVFNGRWYAGRQLQCEFCPVTRWKMAICGLFEVQQCPRGKHCNFLHVFRNPNNEYRDANRDLYPSPDWTSSSFGKNSERRERASHYDEYYGRSRRRRRSPSPDFYKRNGESDRKSSSRHRVKKSHRYGMKSRERRSSPSRRRKDHSPGPWEPEQEEPPQQESQSQPQPQPQSDP</sequence>
<name>U2AFM_MOUSE</name>
<comment type="function">
    <text evidence="1">Pre-mRNA-binding protein required for splicing of both U2- and U12-type introns. Selectively interacts with the 3'-splice site of U2- and U12-type pre-mRNAs and promotes different steps in U2 and U12 intron splicing. Recruited to U12 pre-mRNAs in an ATP-dependent manner and is required for assembly of the prespliceosome, a precursor to other spliceosomal complexes. For U2-type introns, it is selectively and specifically required for the second step of splicing (By similarity).</text>
</comment>
<comment type="subunit">
    <text evidence="1">Component of the U11/U12 snRNPs that are part of the U12-type spliceosome. Interacts (via RS domain) with SRSF1 and SRSF2. Interacts with U2AF2/U2AF65 (By similarity).</text>
</comment>
<comment type="subcellular location">
    <subcellularLocation>
        <location evidence="1">Nucleus</location>
    </subcellularLocation>
</comment>
<comment type="PTM">
    <text evidence="1">Phosphorylated in the RS domain by SRPK1.</text>
</comment>
<evidence type="ECO:0000250" key="1"/>
<evidence type="ECO:0000250" key="2">
    <source>
        <dbReference type="UniProtKB" id="Q15696"/>
    </source>
</evidence>
<evidence type="ECO:0000255" key="3">
    <source>
        <dbReference type="PROSITE-ProRule" id="PRU00176"/>
    </source>
</evidence>
<evidence type="ECO:0000255" key="4">
    <source>
        <dbReference type="PROSITE-ProRule" id="PRU00723"/>
    </source>
</evidence>
<evidence type="ECO:0000256" key="5">
    <source>
        <dbReference type="SAM" id="MobiDB-lite"/>
    </source>
</evidence>
<evidence type="ECO:0007744" key="6">
    <source>
    </source>
</evidence>
<accession>Q62377</accession>
<dbReference type="EMBL" id="D45205">
    <property type="protein sequence ID" value="BAA08143.1"/>
    <property type="molecule type" value="mRNA"/>
</dbReference>
<dbReference type="PIR" id="A57120">
    <property type="entry name" value="A57120"/>
</dbReference>
<dbReference type="SMR" id="Q62377"/>
<dbReference type="FunCoup" id="Q62377">
    <property type="interactions" value="428"/>
</dbReference>
<dbReference type="STRING" id="10090.ENSMUSP00000107908"/>
<dbReference type="iPTMnet" id="Q62377"/>
<dbReference type="PhosphoSitePlus" id="Q62377"/>
<dbReference type="jPOST" id="Q62377"/>
<dbReference type="PaxDb" id="10090-ENSMUSP00000107908"/>
<dbReference type="PeptideAtlas" id="Q62377"/>
<dbReference type="ProteomicsDB" id="297691"/>
<dbReference type="Pumba" id="Q62377"/>
<dbReference type="AGR" id="MGI:103287"/>
<dbReference type="MGI" id="MGI:103287">
    <property type="gene designation" value="Zrsr2"/>
</dbReference>
<dbReference type="eggNOG" id="KOG2202">
    <property type="taxonomic scope" value="Eukaryota"/>
</dbReference>
<dbReference type="InParanoid" id="Q62377"/>
<dbReference type="Reactome" id="R-MMU-72165">
    <property type="pathway name" value="mRNA Splicing - Minor Pathway"/>
</dbReference>
<dbReference type="ChiTaRS" id="Zrsr2">
    <property type="organism name" value="mouse"/>
</dbReference>
<dbReference type="PRO" id="PR:Q62377"/>
<dbReference type="Proteomes" id="UP000000589">
    <property type="component" value="Unplaced"/>
</dbReference>
<dbReference type="RNAct" id="Q62377">
    <property type="molecule type" value="protein"/>
</dbReference>
<dbReference type="GO" id="GO:0005730">
    <property type="term" value="C:nucleolus"/>
    <property type="evidence" value="ECO:0000314"/>
    <property type="project" value="MGI"/>
</dbReference>
<dbReference type="GO" id="GO:0005689">
    <property type="term" value="C:U12-type spliceosomal complex"/>
    <property type="evidence" value="ECO:0000250"/>
    <property type="project" value="UniProtKB"/>
</dbReference>
<dbReference type="GO" id="GO:0089701">
    <property type="term" value="C:U2AF complex"/>
    <property type="evidence" value="ECO:0007669"/>
    <property type="project" value="InterPro"/>
</dbReference>
<dbReference type="GO" id="GO:0030628">
    <property type="term" value="F:pre-mRNA 3'-splice site binding"/>
    <property type="evidence" value="ECO:0000250"/>
    <property type="project" value="UniProtKB"/>
</dbReference>
<dbReference type="GO" id="GO:0008270">
    <property type="term" value="F:zinc ion binding"/>
    <property type="evidence" value="ECO:0007669"/>
    <property type="project" value="UniProtKB-KW"/>
</dbReference>
<dbReference type="GO" id="GO:0000398">
    <property type="term" value="P:mRNA splicing, via spliceosome"/>
    <property type="evidence" value="ECO:0000250"/>
    <property type="project" value="UniProtKB"/>
</dbReference>
<dbReference type="GO" id="GO:0000245">
    <property type="term" value="P:spliceosomal complex assembly"/>
    <property type="evidence" value="ECO:0000250"/>
    <property type="project" value="UniProtKB"/>
</dbReference>
<dbReference type="CDD" id="cd12540">
    <property type="entry name" value="RRM_U2AFBPL"/>
    <property type="match status" value="1"/>
</dbReference>
<dbReference type="FunFam" id="3.30.70.330:FF:000209">
    <property type="entry name" value="U2 small nuclear ribonucleoprotein auxiliary factor 35 kDa subunit-related protein 2"/>
    <property type="match status" value="1"/>
</dbReference>
<dbReference type="Gene3D" id="3.30.70.330">
    <property type="match status" value="1"/>
</dbReference>
<dbReference type="InterPro" id="IPR012677">
    <property type="entry name" value="Nucleotide-bd_a/b_plait_sf"/>
</dbReference>
<dbReference type="InterPro" id="IPR035979">
    <property type="entry name" value="RBD_domain_sf"/>
</dbReference>
<dbReference type="InterPro" id="IPR000504">
    <property type="entry name" value="RRM_dom"/>
</dbReference>
<dbReference type="InterPro" id="IPR003954">
    <property type="entry name" value="RRM_dom_euk"/>
</dbReference>
<dbReference type="InterPro" id="IPR009145">
    <property type="entry name" value="U2AF_small"/>
</dbReference>
<dbReference type="InterPro" id="IPR000571">
    <property type="entry name" value="Znf_CCCH"/>
</dbReference>
<dbReference type="PANTHER" id="PTHR12620">
    <property type="entry name" value="U2 SNRNP AUXILIARY FACTOR, SMALL SUBUNIT"/>
    <property type="match status" value="1"/>
</dbReference>
<dbReference type="Pfam" id="PF00076">
    <property type="entry name" value="RRM_1"/>
    <property type="match status" value="1"/>
</dbReference>
<dbReference type="Pfam" id="PF00642">
    <property type="entry name" value="zf-CCCH"/>
    <property type="match status" value="1"/>
</dbReference>
<dbReference type="PRINTS" id="PR01848">
    <property type="entry name" value="U2AUXFACTOR"/>
</dbReference>
<dbReference type="SMART" id="SM00361">
    <property type="entry name" value="RRM_1"/>
    <property type="match status" value="1"/>
</dbReference>
<dbReference type="SMART" id="SM00356">
    <property type="entry name" value="ZnF_C3H1"/>
    <property type="match status" value="2"/>
</dbReference>
<dbReference type="SUPFAM" id="SSF54928">
    <property type="entry name" value="RNA-binding domain, RBD"/>
    <property type="match status" value="1"/>
</dbReference>
<dbReference type="PROSITE" id="PS50102">
    <property type="entry name" value="RRM"/>
    <property type="match status" value="1"/>
</dbReference>
<dbReference type="PROSITE" id="PS50103">
    <property type="entry name" value="ZF_C3H1"/>
    <property type="match status" value="2"/>
</dbReference>
<organism>
    <name type="scientific">Mus musculus</name>
    <name type="common">Mouse</name>
    <dbReference type="NCBI Taxonomy" id="10090"/>
    <lineage>
        <taxon>Eukaryota</taxon>
        <taxon>Metazoa</taxon>
        <taxon>Chordata</taxon>
        <taxon>Craniata</taxon>
        <taxon>Vertebrata</taxon>
        <taxon>Euteleostomi</taxon>
        <taxon>Mammalia</taxon>
        <taxon>Eutheria</taxon>
        <taxon>Euarchontoglires</taxon>
        <taxon>Glires</taxon>
        <taxon>Rodentia</taxon>
        <taxon>Myomorpha</taxon>
        <taxon>Muroidea</taxon>
        <taxon>Muridae</taxon>
        <taxon>Murinae</taxon>
        <taxon>Mus</taxon>
        <taxon>Mus</taxon>
    </lineage>
</organism>
<feature type="chain" id="PRO_0000082002" description="U2 small nuclear ribonucleoprotein auxiliary factor 35 kDa subunit-related protein 2">
    <location>
        <begin position="1"/>
        <end position="462"/>
    </location>
</feature>
<feature type="domain" description="RRM" evidence="3">
    <location>
        <begin position="202"/>
        <end position="308"/>
    </location>
</feature>
<feature type="zinc finger region" description="C3H1-type 1" evidence="4">
    <location>
        <begin position="170"/>
        <end position="198"/>
    </location>
</feature>
<feature type="zinc finger region" description="C3H1-type 2" evidence="4">
    <location>
        <begin position="310"/>
        <end position="337"/>
    </location>
</feature>
<feature type="region of interest" description="Disordered" evidence="5">
    <location>
        <begin position="1"/>
        <end position="22"/>
    </location>
</feature>
<feature type="region of interest" description="Disordered" evidence="5">
    <location>
        <begin position="44"/>
        <end position="66"/>
    </location>
</feature>
<feature type="region of interest" description="Disordered" evidence="5">
    <location>
        <begin position="115"/>
        <end position="138"/>
    </location>
</feature>
<feature type="region of interest" description="Disordered" evidence="5">
    <location>
        <begin position="354"/>
        <end position="462"/>
    </location>
</feature>
<feature type="compositionally biased region" description="Low complexity" evidence="5">
    <location>
        <begin position="1"/>
        <end position="13"/>
    </location>
</feature>
<feature type="compositionally biased region" description="Basic and acidic residues" evidence="5">
    <location>
        <begin position="57"/>
        <end position="66"/>
    </location>
</feature>
<feature type="compositionally biased region" description="Basic and acidic residues" evidence="5">
    <location>
        <begin position="364"/>
        <end position="379"/>
    </location>
</feature>
<feature type="compositionally biased region" description="Basic and acidic residues" evidence="5">
    <location>
        <begin position="392"/>
        <end position="403"/>
    </location>
</feature>
<feature type="compositionally biased region" description="Basic residues" evidence="5">
    <location>
        <begin position="404"/>
        <end position="417"/>
    </location>
</feature>
<feature type="modified residue" description="Phosphoserine" evidence="6">
    <location>
        <position position="353"/>
    </location>
</feature>
<feature type="modified residue" description="Phosphoserine" evidence="2">
    <location>
        <position position="389"/>
    </location>
</feature>
<feature type="cross-link" description="Glycyl lysine isopeptide (Lys-Gly) (interchain with G-Cter in SUMO2)" evidence="2">
    <location>
        <position position="49"/>
    </location>
</feature>
<proteinExistence type="evidence at protein level"/>